<feature type="signal peptide" evidence="2">
    <location>
        <begin position="1"/>
        <end position="22"/>
    </location>
</feature>
<feature type="chain" id="PRO_0000043384" description="Curli production assembly/transport component CsgE">
    <location>
        <begin position="23"/>
        <end position="129"/>
    </location>
</feature>
<proteinExistence type="inferred from homology"/>
<name>CSGE_ECO57</name>
<evidence type="ECO:0000250" key="1"/>
<evidence type="ECO:0000255" key="2"/>
<gene>
    <name type="primary">csgE</name>
    <name type="ordered locus">Z1672</name>
    <name type="ordered locus">ECs1416</name>
</gene>
<accession>P0AE97</accession>
<accession>P52105</accession>
<protein>
    <recommendedName>
        <fullName>Curli production assembly/transport component CsgE</fullName>
    </recommendedName>
</protein>
<sequence>MKRYLRWIVAAEFLFAAGNLHAVEVEVPGLLTDHTVSSIGHDFYRAFSDKWESDYTGNLTINERPSARWGSWITITVNQDVIFQTFLFPLKRDFEKTVVFALIQTEEALNRRQINQALLSTGDLAHDEF</sequence>
<dbReference type="EMBL" id="AE005174">
    <property type="protein sequence ID" value="AAG55785.1"/>
    <property type="molecule type" value="Genomic_DNA"/>
</dbReference>
<dbReference type="EMBL" id="BA000007">
    <property type="protein sequence ID" value="BAB34839.1"/>
    <property type="molecule type" value="Genomic_DNA"/>
</dbReference>
<dbReference type="PIR" id="E85665">
    <property type="entry name" value="E85665"/>
</dbReference>
<dbReference type="PIR" id="H90805">
    <property type="entry name" value="H90805"/>
</dbReference>
<dbReference type="RefSeq" id="NP_309443.1">
    <property type="nucleotide sequence ID" value="NC_002695.1"/>
</dbReference>
<dbReference type="RefSeq" id="WP_000833288.1">
    <property type="nucleotide sequence ID" value="NZ_VOAI01000018.1"/>
</dbReference>
<dbReference type="SMR" id="P0AE97"/>
<dbReference type="STRING" id="155864.Z1672"/>
<dbReference type="GeneID" id="75203627"/>
<dbReference type="GeneID" id="912466"/>
<dbReference type="KEGG" id="ece:Z1672"/>
<dbReference type="KEGG" id="ecs:ECs_1416"/>
<dbReference type="PATRIC" id="fig|386585.9.peg.1516"/>
<dbReference type="eggNOG" id="ENOG502ZPXX">
    <property type="taxonomic scope" value="Bacteria"/>
</dbReference>
<dbReference type="HOGENOM" id="CLU_131424_0_0_6"/>
<dbReference type="OMA" id="VGHDFYR"/>
<dbReference type="Proteomes" id="UP000000558">
    <property type="component" value="Chromosome"/>
</dbReference>
<dbReference type="Proteomes" id="UP000002519">
    <property type="component" value="Chromosome"/>
</dbReference>
<dbReference type="InterPro" id="IPR018900">
    <property type="entry name" value="Curli_CsgE"/>
</dbReference>
<dbReference type="NCBIfam" id="NF007701">
    <property type="entry name" value="PRK10386.1"/>
    <property type="match status" value="1"/>
</dbReference>
<dbReference type="Pfam" id="PF10627">
    <property type="entry name" value="CsgE"/>
    <property type="match status" value="1"/>
</dbReference>
<keyword id="KW-1185">Reference proteome</keyword>
<keyword id="KW-0732">Signal</keyword>
<reference key="1">
    <citation type="journal article" date="2001" name="Nature">
        <title>Genome sequence of enterohaemorrhagic Escherichia coli O157:H7.</title>
        <authorList>
            <person name="Perna N.T."/>
            <person name="Plunkett G. III"/>
            <person name="Burland V."/>
            <person name="Mau B."/>
            <person name="Glasner J.D."/>
            <person name="Rose D.J."/>
            <person name="Mayhew G.F."/>
            <person name="Evans P.S."/>
            <person name="Gregor J."/>
            <person name="Kirkpatrick H.A."/>
            <person name="Posfai G."/>
            <person name="Hackett J."/>
            <person name="Klink S."/>
            <person name="Boutin A."/>
            <person name="Shao Y."/>
            <person name="Miller L."/>
            <person name="Grotbeck E.J."/>
            <person name="Davis N.W."/>
            <person name="Lim A."/>
            <person name="Dimalanta E.T."/>
            <person name="Potamousis K."/>
            <person name="Apodaca J."/>
            <person name="Anantharaman T.S."/>
            <person name="Lin J."/>
            <person name="Yen G."/>
            <person name="Schwartz D.C."/>
            <person name="Welch R.A."/>
            <person name="Blattner F.R."/>
        </authorList>
    </citation>
    <scope>NUCLEOTIDE SEQUENCE [LARGE SCALE GENOMIC DNA]</scope>
    <source>
        <strain>O157:H7 / EDL933 / ATCC 700927 / EHEC</strain>
    </source>
</reference>
<reference key="2">
    <citation type="journal article" date="2001" name="DNA Res.">
        <title>Complete genome sequence of enterohemorrhagic Escherichia coli O157:H7 and genomic comparison with a laboratory strain K-12.</title>
        <authorList>
            <person name="Hayashi T."/>
            <person name="Makino K."/>
            <person name="Ohnishi M."/>
            <person name="Kurokawa K."/>
            <person name="Ishii K."/>
            <person name="Yokoyama K."/>
            <person name="Han C.-G."/>
            <person name="Ohtsubo E."/>
            <person name="Nakayama K."/>
            <person name="Murata T."/>
            <person name="Tanaka M."/>
            <person name="Tobe T."/>
            <person name="Iida T."/>
            <person name="Takami H."/>
            <person name="Honda T."/>
            <person name="Sasakawa C."/>
            <person name="Ogasawara N."/>
            <person name="Yasunaga T."/>
            <person name="Kuhara S."/>
            <person name="Shiba T."/>
            <person name="Hattori M."/>
            <person name="Shinagawa H."/>
        </authorList>
    </citation>
    <scope>NUCLEOTIDE SEQUENCE [LARGE SCALE GENOMIC DNA]</scope>
    <source>
        <strain>O157:H7 / Sakai / RIMD 0509952 / EHEC</strain>
    </source>
</reference>
<comment type="function">
    <text evidence="1">May be involved in the biogenesis of curli organelles.</text>
</comment>
<organism>
    <name type="scientific">Escherichia coli O157:H7</name>
    <dbReference type="NCBI Taxonomy" id="83334"/>
    <lineage>
        <taxon>Bacteria</taxon>
        <taxon>Pseudomonadati</taxon>
        <taxon>Pseudomonadota</taxon>
        <taxon>Gammaproteobacteria</taxon>
        <taxon>Enterobacterales</taxon>
        <taxon>Enterobacteriaceae</taxon>
        <taxon>Escherichia</taxon>
    </lineage>
</organism>